<comment type="function">
    <text evidence="1">Transglycosylase involved in peptidoglycan cell wall formation. Required for the regulation of cell length.</text>
</comment>
<comment type="catalytic activity">
    <reaction evidence="1">
        <text>[GlcNAc-(1-&gt;4)-Mur2Ac(oyl-L-Ala-gamma-D-Glu-L-Lys-D-Ala-D-Ala)](n)-di-trans,octa-cis-undecaprenyl diphosphate + beta-D-GlcNAc-(1-&gt;4)-Mur2Ac(oyl-L-Ala-gamma-D-Glu-L-Lys-D-Ala-D-Ala)-di-trans,octa-cis-undecaprenyl diphosphate = [GlcNAc-(1-&gt;4)-Mur2Ac(oyl-L-Ala-gamma-D-Glu-L-Lys-D-Ala-D-Ala)](n+1)-di-trans,octa-cis-undecaprenyl diphosphate + di-trans,octa-cis-undecaprenyl diphosphate + H(+)</text>
        <dbReference type="Rhea" id="RHEA:23708"/>
        <dbReference type="Rhea" id="RHEA-COMP:9602"/>
        <dbReference type="Rhea" id="RHEA-COMP:9603"/>
        <dbReference type="ChEBI" id="CHEBI:15378"/>
        <dbReference type="ChEBI" id="CHEBI:58405"/>
        <dbReference type="ChEBI" id="CHEBI:60033"/>
        <dbReference type="ChEBI" id="CHEBI:78435"/>
        <dbReference type="EC" id="2.4.99.28"/>
    </reaction>
</comment>
<comment type="pathway">
    <text evidence="1">Cell wall biogenesis; peptidoglycan biosynthesis.</text>
</comment>
<comment type="subcellular location">
    <subcellularLocation>
        <location evidence="1">Cell inner membrane</location>
        <topology evidence="2">Multi-pass membrane protein</topology>
    </subcellularLocation>
</comment>
<comment type="similarity">
    <text evidence="3">Belongs to the SEDS family.</text>
</comment>
<keyword id="KW-0997">Cell inner membrane</keyword>
<keyword id="KW-1003">Cell membrane</keyword>
<keyword id="KW-0133">Cell shape</keyword>
<keyword id="KW-0961">Cell wall biogenesis/degradation</keyword>
<keyword id="KW-0328">Glycosyltransferase</keyword>
<keyword id="KW-0472">Membrane</keyword>
<keyword id="KW-0573">Peptidoglycan synthesis</keyword>
<keyword id="KW-1185">Reference proteome</keyword>
<keyword id="KW-0808">Transferase</keyword>
<keyword id="KW-0812">Transmembrane</keyword>
<keyword id="KW-1133">Transmembrane helix</keyword>
<dbReference type="EC" id="2.4.99.28" evidence="1"/>
<dbReference type="EMBL" id="AE000516">
    <property type="protein sequence ID" value="AAK44242.1"/>
    <property type="molecule type" value="Genomic_DNA"/>
</dbReference>
<dbReference type="PIR" id="G70699">
    <property type="entry name" value="G70699"/>
</dbReference>
<dbReference type="RefSeq" id="WP_003400364.1">
    <property type="nucleotide sequence ID" value="NZ_KK341227.1"/>
</dbReference>
<dbReference type="SMR" id="P9WN98"/>
<dbReference type="KEGG" id="mtc:MT0020"/>
<dbReference type="PATRIC" id="fig|83331.31.peg.21"/>
<dbReference type="HOGENOM" id="CLU_029243_3_1_11"/>
<dbReference type="UniPathway" id="UPA00219"/>
<dbReference type="Proteomes" id="UP000001020">
    <property type="component" value="Chromosome"/>
</dbReference>
<dbReference type="GO" id="GO:0032153">
    <property type="term" value="C:cell division site"/>
    <property type="evidence" value="ECO:0007669"/>
    <property type="project" value="TreeGrafter"/>
</dbReference>
<dbReference type="GO" id="GO:0005886">
    <property type="term" value="C:plasma membrane"/>
    <property type="evidence" value="ECO:0007669"/>
    <property type="project" value="UniProtKB-SubCell"/>
</dbReference>
<dbReference type="GO" id="GO:0016757">
    <property type="term" value="F:glycosyltransferase activity"/>
    <property type="evidence" value="ECO:0007669"/>
    <property type="project" value="UniProtKB-KW"/>
</dbReference>
<dbReference type="GO" id="GO:0015648">
    <property type="term" value="F:lipid-linked peptidoglycan transporter activity"/>
    <property type="evidence" value="ECO:0007669"/>
    <property type="project" value="TreeGrafter"/>
</dbReference>
<dbReference type="GO" id="GO:0051301">
    <property type="term" value="P:cell division"/>
    <property type="evidence" value="ECO:0007669"/>
    <property type="project" value="InterPro"/>
</dbReference>
<dbReference type="GO" id="GO:0071555">
    <property type="term" value="P:cell wall organization"/>
    <property type="evidence" value="ECO:0007669"/>
    <property type="project" value="UniProtKB-KW"/>
</dbReference>
<dbReference type="GO" id="GO:0009252">
    <property type="term" value="P:peptidoglycan biosynthetic process"/>
    <property type="evidence" value="ECO:0007669"/>
    <property type="project" value="UniProtKB-UniPathway"/>
</dbReference>
<dbReference type="GO" id="GO:0008360">
    <property type="term" value="P:regulation of cell shape"/>
    <property type="evidence" value="ECO:0007669"/>
    <property type="project" value="UniProtKB-KW"/>
</dbReference>
<dbReference type="InterPro" id="IPR018365">
    <property type="entry name" value="Cell_cycle_FtsW-rel_CS"/>
</dbReference>
<dbReference type="InterPro" id="IPR001182">
    <property type="entry name" value="FtsW/RodA"/>
</dbReference>
<dbReference type="PANTHER" id="PTHR30474">
    <property type="entry name" value="CELL CYCLE PROTEIN"/>
    <property type="match status" value="1"/>
</dbReference>
<dbReference type="PANTHER" id="PTHR30474:SF3">
    <property type="entry name" value="PEPTIDOGLYCAN GLYCOSYLTRANSFERASE RODA"/>
    <property type="match status" value="1"/>
</dbReference>
<dbReference type="Pfam" id="PF01098">
    <property type="entry name" value="FTSW_RODA_SPOVE"/>
    <property type="match status" value="1"/>
</dbReference>
<dbReference type="PROSITE" id="PS00428">
    <property type="entry name" value="FTSW_RODA_SPOVE"/>
    <property type="match status" value="1"/>
</dbReference>
<sequence>MTTRLQAPVAVTPPLPTRRNAELLLLCFAAVITFAALLVVQANQDQGVPWDLTSYGLAFLTLFGSAHLAIRRFAPYTDPLLLPVVALLNGLGLVMIHRLDLVDNEIGEHRHPSANQQMLWTLVGVAAFALVVTFLKDHRQLARYGYICGLAGLVFLAVPALLPAALSEQNGAKIWIRLPGFSIQPAEFSKILLLIFFSAVLVAKRGLFTSAGKHLLGMTLPRPRDLAPLLAAWVISVGVMVFEKDLGASLLLYTSFLVVVYLATQRFSWVVIGLTLFAAGTLVAYFIFEHVRLRVQTWLDPFADPDGTGYQIVQSLFSFATGGIFGTGLGNGQPDTVPAASTDFIIAAFGEELGLVGLTAILMLYTIVIIRGLRTAIATRDSFGKLLAAGLSSTLAIQLFIVVGGVTRLIPLTGLTTPWMSYGGSSLLANYILLAILARISHGARRPLRTRPRNKSPITAAGTEVIERV</sequence>
<feature type="chain" id="PRO_0000427164" description="Peptidoglycan glycosyltransferase RodA">
    <location>
        <begin position="1"/>
        <end position="469"/>
    </location>
</feature>
<feature type="transmembrane region" description="Helical" evidence="2">
    <location>
        <begin position="20"/>
        <end position="40"/>
    </location>
</feature>
<feature type="transmembrane region" description="Helical" evidence="2">
    <location>
        <begin position="50"/>
        <end position="70"/>
    </location>
</feature>
<feature type="transmembrane region" description="Helical" evidence="2">
    <location>
        <begin position="76"/>
        <end position="96"/>
    </location>
</feature>
<feature type="transmembrane region" description="Helical" evidence="2">
    <location>
        <begin position="115"/>
        <end position="135"/>
    </location>
</feature>
<feature type="transmembrane region" description="Helical" evidence="2">
    <location>
        <begin position="146"/>
        <end position="166"/>
    </location>
</feature>
<feature type="transmembrane region" description="Helical" evidence="2">
    <location>
        <begin position="183"/>
        <end position="203"/>
    </location>
</feature>
<feature type="transmembrane region" description="Helical" evidence="2">
    <location>
        <begin position="226"/>
        <end position="246"/>
    </location>
</feature>
<feature type="transmembrane region" description="Helical" evidence="2">
    <location>
        <begin position="248"/>
        <end position="264"/>
    </location>
</feature>
<feature type="transmembrane region" description="Helical" evidence="2">
    <location>
        <begin position="267"/>
        <end position="287"/>
    </location>
</feature>
<feature type="transmembrane region" description="Helical" evidence="2">
    <location>
        <begin position="312"/>
        <end position="332"/>
    </location>
</feature>
<feature type="transmembrane region" description="Helical" evidence="2">
    <location>
        <begin position="344"/>
        <end position="364"/>
    </location>
</feature>
<feature type="transmembrane region" description="Helical" evidence="2">
    <location>
        <begin position="386"/>
        <end position="406"/>
    </location>
</feature>
<feature type="transmembrane region" description="Helical" evidence="2">
    <location>
        <begin position="418"/>
        <end position="438"/>
    </location>
</feature>
<evidence type="ECO:0000250" key="1">
    <source>
        <dbReference type="UniProtKB" id="P9WN99"/>
    </source>
</evidence>
<evidence type="ECO:0000255" key="2"/>
<evidence type="ECO:0000305" key="3"/>
<name>RODA_MYCTO</name>
<accession>P9WN98</accession>
<accession>L0T251</accession>
<accession>P63760</accession>
<accession>P71587</accession>
<gene>
    <name type="primary">rodA</name>
    <name type="ordered locus">MT0020</name>
</gene>
<proteinExistence type="inferred from homology"/>
<organism>
    <name type="scientific">Mycobacterium tuberculosis (strain CDC 1551 / Oshkosh)</name>
    <dbReference type="NCBI Taxonomy" id="83331"/>
    <lineage>
        <taxon>Bacteria</taxon>
        <taxon>Bacillati</taxon>
        <taxon>Actinomycetota</taxon>
        <taxon>Actinomycetes</taxon>
        <taxon>Mycobacteriales</taxon>
        <taxon>Mycobacteriaceae</taxon>
        <taxon>Mycobacterium</taxon>
        <taxon>Mycobacterium tuberculosis complex</taxon>
    </lineage>
</organism>
<reference key="1">
    <citation type="journal article" date="2002" name="J. Bacteriol.">
        <title>Whole-genome comparison of Mycobacterium tuberculosis clinical and laboratory strains.</title>
        <authorList>
            <person name="Fleischmann R.D."/>
            <person name="Alland D."/>
            <person name="Eisen J.A."/>
            <person name="Carpenter L."/>
            <person name="White O."/>
            <person name="Peterson J.D."/>
            <person name="DeBoy R.T."/>
            <person name="Dodson R.J."/>
            <person name="Gwinn M.L."/>
            <person name="Haft D.H."/>
            <person name="Hickey E.K."/>
            <person name="Kolonay J.F."/>
            <person name="Nelson W.C."/>
            <person name="Umayam L.A."/>
            <person name="Ermolaeva M.D."/>
            <person name="Salzberg S.L."/>
            <person name="Delcher A."/>
            <person name="Utterback T.R."/>
            <person name="Weidman J.F."/>
            <person name="Khouri H.M."/>
            <person name="Gill J."/>
            <person name="Mikula A."/>
            <person name="Bishai W."/>
            <person name="Jacobs W.R. Jr."/>
            <person name="Venter J.C."/>
            <person name="Fraser C.M."/>
        </authorList>
    </citation>
    <scope>NUCLEOTIDE SEQUENCE [LARGE SCALE GENOMIC DNA]</scope>
    <source>
        <strain>CDC 1551 / Oshkosh</strain>
    </source>
</reference>
<protein>
    <recommendedName>
        <fullName evidence="1">Peptidoglycan glycosyltransferase RodA</fullName>
        <ecNumber evidence="1">2.4.99.28</ecNumber>
    </recommendedName>
    <alternativeName>
        <fullName evidence="1">Non-canonical transglycosylase RodA</fullName>
    </alternativeName>
</protein>